<sequence length="362" mass="40826">MVTSAMGPSPRVEELARSGLDTIPKDYVRPEEELKSIIGNILAEEKSSEGPQLPTIDLEEMDSRDEEGRKKCHEELKKAATDWGVMHLINHGIPEELIDRVKAAGKEFFELPVEEKEAYANDQAAGNVQGYGSKLANNASGQLEWEDYFFHCVYPEHKTDLSIWPTKPPDYIPATSEYAKQLRALATKILSVLSIGLGLEKGRLEKEVGGAEDLIVQMKINFYPKCPQPELALGWEAHTDVSALTFILHNMVPGLQLFYEDKWVTAKCVPNSIIMHIGDTLEILSNGKYKSILHRGLVNKEKVRISWAVFCEPPKEKIVLQPLPETVSEVEPPRFPPRTFAQHLKHKLFRKTDGDLDEKPTY</sequence>
<keyword id="KW-0223">Dioxygenase</keyword>
<keyword id="KW-0284">Flavonoid biosynthesis</keyword>
<keyword id="KW-0408">Iron</keyword>
<keyword id="KW-0479">Metal-binding</keyword>
<keyword id="KW-0560">Oxidoreductase</keyword>
<keyword id="KW-0847">Vitamin C</keyword>
<reference key="1">
    <citation type="journal article" date="1999" name="Plant J.">
        <title>Direct evidence for anthocyanidin synthase as a 2-oxoglutarate-dependent oxygenase: molecular cloning and functional expression of cDNA from a red forma of Perilla frutescens.</title>
        <authorList>
            <person name="Saito K."/>
            <person name="Kobayashi M."/>
            <person name="Gong Z."/>
            <person name="Tanaka Y."/>
            <person name="Yamazaki M."/>
        </authorList>
    </citation>
    <scope>NUCLEOTIDE SEQUENCE [MRNA]</scope>
    <scope>ENZYME ACTIVITY</scope>
    <scope>TISSUE SPECIFICITY</scope>
    <source>
        <tissue>Leaf</tissue>
    </source>
</reference>
<evidence type="ECO:0000250" key="1"/>
<evidence type="ECO:0000255" key="2"/>
<evidence type="ECO:0000255" key="3">
    <source>
        <dbReference type="PROSITE-ProRule" id="PRU00805"/>
    </source>
</evidence>
<evidence type="ECO:0000256" key="4">
    <source>
        <dbReference type="SAM" id="MobiDB-lite"/>
    </source>
</evidence>
<evidence type="ECO:0000269" key="5">
    <source>
    </source>
</evidence>
<evidence type="ECO:0000305" key="6"/>
<proteinExistence type="evidence at transcript level"/>
<feature type="chain" id="PRO_0000067302" description="Leucoanthocyanidin dioxygenase">
    <location>
        <begin position="1"/>
        <end position="362"/>
    </location>
</feature>
<feature type="domain" description="Fe2OG dioxygenase" evidence="3">
    <location>
        <begin position="214"/>
        <end position="313"/>
    </location>
</feature>
<feature type="region of interest" description="Disordered" evidence="4">
    <location>
        <begin position="1"/>
        <end position="23"/>
    </location>
</feature>
<feature type="active site" evidence="2">
    <location>
        <position position="304"/>
    </location>
</feature>
<feature type="binding site" evidence="3">
    <location>
        <position position="238"/>
    </location>
    <ligand>
        <name>Fe cation</name>
        <dbReference type="ChEBI" id="CHEBI:24875"/>
    </ligand>
</feature>
<feature type="binding site" evidence="3">
    <location>
        <position position="240"/>
    </location>
    <ligand>
        <name>Fe cation</name>
        <dbReference type="ChEBI" id="CHEBI:24875"/>
    </ligand>
</feature>
<feature type="binding site" evidence="3">
    <location>
        <position position="294"/>
    </location>
    <ligand>
        <name>Fe cation</name>
        <dbReference type="ChEBI" id="CHEBI:24875"/>
    </ligand>
</feature>
<dbReference type="EC" id="1.14.20.4" evidence="5"/>
<dbReference type="EMBL" id="AB003779">
    <property type="protein sequence ID" value="BAA20143.1"/>
    <property type="molecule type" value="mRNA"/>
</dbReference>
<dbReference type="SMR" id="O04274"/>
<dbReference type="KEGG" id="ag:BAA20143"/>
<dbReference type="UniPathway" id="UPA00009"/>
<dbReference type="GO" id="GO:0031418">
    <property type="term" value="F:L-ascorbic acid binding"/>
    <property type="evidence" value="ECO:0007669"/>
    <property type="project" value="UniProtKB-KW"/>
</dbReference>
<dbReference type="GO" id="GO:0050589">
    <property type="term" value="F:leucocyanidin oxygenase activity"/>
    <property type="evidence" value="ECO:0007669"/>
    <property type="project" value="UniProtKB-EC"/>
</dbReference>
<dbReference type="GO" id="GO:0046872">
    <property type="term" value="F:metal ion binding"/>
    <property type="evidence" value="ECO:0007669"/>
    <property type="project" value="UniProtKB-KW"/>
</dbReference>
<dbReference type="GO" id="GO:0009718">
    <property type="term" value="P:anthocyanin-containing compound biosynthetic process"/>
    <property type="evidence" value="ECO:0007669"/>
    <property type="project" value="UniProtKB-UniPathway"/>
</dbReference>
<dbReference type="GO" id="GO:0009805">
    <property type="term" value="P:coumarin biosynthetic process"/>
    <property type="evidence" value="ECO:0007669"/>
    <property type="project" value="UniProtKB-ARBA"/>
</dbReference>
<dbReference type="GO" id="GO:0002238">
    <property type="term" value="P:response to molecule of fungal origin"/>
    <property type="evidence" value="ECO:0007669"/>
    <property type="project" value="UniProtKB-ARBA"/>
</dbReference>
<dbReference type="FunFam" id="2.60.120.330:FF:000009">
    <property type="entry name" value="Flavonol synthase"/>
    <property type="match status" value="1"/>
</dbReference>
<dbReference type="Gene3D" id="2.60.120.330">
    <property type="entry name" value="B-lactam Antibiotic, Isopenicillin N Synthase, Chain"/>
    <property type="match status" value="1"/>
</dbReference>
<dbReference type="InterPro" id="IPR026992">
    <property type="entry name" value="DIOX_N"/>
</dbReference>
<dbReference type="InterPro" id="IPR044861">
    <property type="entry name" value="IPNS-like_FE2OG_OXY"/>
</dbReference>
<dbReference type="InterPro" id="IPR027443">
    <property type="entry name" value="IPNS-like_sf"/>
</dbReference>
<dbReference type="InterPro" id="IPR005123">
    <property type="entry name" value="Oxoglu/Fe-dep_dioxygenase_dom"/>
</dbReference>
<dbReference type="InterPro" id="IPR050295">
    <property type="entry name" value="Plant_2OG-oxidoreductases"/>
</dbReference>
<dbReference type="PANTHER" id="PTHR47991">
    <property type="entry name" value="OXOGLUTARATE/IRON-DEPENDENT DIOXYGENASE"/>
    <property type="match status" value="1"/>
</dbReference>
<dbReference type="Pfam" id="PF03171">
    <property type="entry name" value="2OG-FeII_Oxy"/>
    <property type="match status" value="1"/>
</dbReference>
<dbReference type="Pfam" id="PF14226">
    <property type="entry name" value="DIOX_N"/>
    <property type="match status" value="1"/>
</dbReference>
<dbReference type="SUPFAM" id="SSF51197">
    <property type="entry name" value="Clavaminate synthase-like"/>
    <property type="match status" value="1"/>
</dbReference>
<dbReference type="PROSITE" id="PS51471">
    <property type="entry name" value="FE2OG_OXY"/>
    <property type="match status" value="1"/>
</dbReference>
<organism>
    <name type="scientific">Perilla frutescens</name>
    <name type="common">Beefsteak mint</name>
    <name type="synonym">Perilla ocymoides</name>
    <dbReference type="NCBI Taxonomy" id="48386"/>
    <lineage>
        <taxon>Eukaryota</taxon>
        <taxon>Viridiplantae</taxon>
        <taxon>Streptophyta</taxon>
        <taxon>Embryophyta</taxon>
        <taxon>Tracheophyta</taxon>
        <taxon>Spermatophyta</taxon>
        <taxon>Magnoliopsida</taxon>
        <taxon>eudicotyledons</taxon>
        <taxon>Gunneridae</taxon>
        <taxon>Pentapetalae</taxon>
        <taxon>asterids</taxon>
        <taxon>lamiids</taxon>
        <taxon>Lamiales</taxon>
        <taxon>Lamiaceae</taxon>
        <taxon>Nepetoideae</taxon>
        <taxon>Elsholtzieae</taxon>
        <taxon>Perilla</taxon>
    </lineage>
</organism>
<name>LDOX_PERFR</name>
<gene>
    <name type="primary">ANS</name>
</gene>
<comment type="function">
    <text>Oxidation of leucoanthocyanidins into anthocyanidins.</text>
</comment>
<comment type="catalytic activity">
    <reaction evidence="5">
        <text>a (2R,3S,4S)-leucoanthocyanidin + 2-oxoglutarate + O2 = a 4-H-anthocyanidin with a 3-hydroxy group + succinate + CO2 + 2 H2O</text>
        <dbReference type="Rhea" id="RHEA:54432"/>
        <dbReference type="ChEBI" id="CHEBI:15377"/>
        <dbReference type="ChEBI" id="CHEBI:15379"/>
        <dbReference type="ChEBI" id="CHEBI:16526"/>
        <dbReference type="ChEBI" id="CHEBI:16810"/>
        <dbReference type="ChEBI" id="CHEBI:30031"/>
        <dbReference type="ChEBI" id="CHEBI:138176"/>
        <dbReference type="ChEBI" id="CHEBI:138177"/>
        <dbReference type="EC" id="1.14.20.4"/>
    </reaction>
</comment>
<comment type="cofactor">
    <cofactor evidence="1">
        <name>Fe cation</name>
        <dbReference type="ChEBI" id="CHEBI:24875"/>
    </cofactor>
    <text evidence="1">Binds 1 Fe cation per subunit.</text>
</comment>
<comment type="cofactor">
    <cofactor evidence="1">
        <name>L-ascorbate</name>
        <dbReference type="ChEBI" id="CHEBI:38290"/>
    </cofactor>
    <text evidence="1">Binds 1 ascorbate molecule per subunit.</text>
</comment>
<comment type="pathway">
    <text>Pigment biosynthesis; anthocyanin biosynthesis.</text>
</comment>
<comment type="tissue specificity">
    <text evidence="5">Expressed in red but not in green forma of P.frutescens. In red forma, it is predominantly expressed in stems and leaves, but not in roots.</text>
</comment>
<comment type="similarity">
    <text evidence="6">Belongs to the iron/ascorbate-dependent oxidoreductase family.</text>
</comment>
<accession>O04274</accession>
<protein>
    <recommendedName>
        <fullName>Leucoanthocyanidin dioxygenase</fullName>
        <shortName>LDOX</shortName>
        <shortName>Leucocyanidin oxygenase</shortName>
        <ecNumber evidence="5">1.14.20.4</ecNumber>
    </recommendedName>
    <alternativeName>
        <fullName>Leucoanthocyanidin hydroxylase</fullName>
    </alternativeName>
</protein>